<organism>
    <name type="scientific">Coxiella burnetii (strain RSA 493 / Nine Mile phase I)</name>
    <dbReference type="NCBI Taxonomy" id="227377"/>
    <lineage>
        <taxon>Bacteria</taxon>
        <taxon>Pseudomonadati</taxon>
        <taxon>Pseudomonadota</taxon>
        <taxon>Gammaproteobacteria</taxon>
        <taxon>Legionellales</taxon>
        <taxon>Coxiellaceae</taxon>
        <taxon>Coxiella</taxon>
    </lineage>
</organism>
<dbReference type="EC" id="2.1.1.166" evidence="1"/>
<dbReference type="EMBL" id="AE016828">
    <property type="protein sequence ID" value="AAO90856.1"/>
    <property type="molecule type" value="Genomic_DNA"/>
</dbReference>
<dbReference type="RefSeq" id="NP_820342.1">
    <property type="nucleotide sequence ID" value="NC_002971.3"/>
</dbReference>
<dbReference type="RefSeq" id="WP_010958173.1">
    <property type="nucleotide sequence ID" value="NZ_CCYB01000029.1"/>
</dbReference>
<dbReference type="SMR" id="Q83BY4"/>
<dbReference type="STRING" id="227377.CBU_1353"/>
<dbReference type="EnsemblBacteria" id="AAO90856">
    <property type="protein sequence ID" value="AAO90856"/>
    <property type="gene ID" value="CBU_1353"/>
</dbReference>
<dbReference type="GeneID" id="1209259"/>
<dbReference type="KEGG" id="cbu:CBU_1353"/>
<dbReference type="PATRIC" id="fig|227377.7.peg.1348"/>
<dbReference type="eggNOG" id="COG0293">
    <property type="taxonomic scope" value="Bacteria"/>
</dbReference>
<dbReference type="HOGENOM" id="CLU_009422_4_0_6"/>
<dbReference type="OrthoDB" id="9790080at2"/>
<dbReference type="Proteomes" id="UP000002671">
    <property type="component" value="Chromosome"/>
</dbReference>
<dbReference type="GO" id="GO:0005737">
    <property type="term" value="C:cytoplasm"/>
    <property type="evidence" value="ECO:0007669"/>
    <property type="project" value="UniProtKB-SubCell"/>
</dbReference>
<dbReference type="GO" id="GO:0008650">
    <property type="term" value="F:rRNA (uridine-2'-O-)-methyltransferase activity"/>
    <property type="evidence" value="ECO:0000318"/>
    <property type="project" value="GO_Central"/>
</dbReference>
<dbReference type="GO" id="GO:0001510">
    <property type="term" value="P:RNA methylation"/>
    <property type="evidence" value="ECO:0000318"/>
    <property type="project" value="GO_Central"/>
</dbReference>
<dbReference type="FunFam" id="3.40.50.150:FF:000005">
    <property type="entry name" value="Ribosomal RNA large subunit methyltransferase E"/>
    <property type="match status" value="1"/>
</dbReference>
<dbReference type="Gene3D" id="3.40.50.150">
    <property type="entry name" value="Vaccinia Virus protein VP39"/>
    <property type="match status" value="1"/>
</dbReference>
<dbReference type="HAMAP" id="MF_01547">
    <property type="entry name" value="RNA_methyltr_E"/>
    <property type="match status" value="1"/>
</dbReference>
<dbReference type="InterPro" id="IPR050082">
    <property type="entry name" value="RNA_methyltr_RlmE"/>
</dbReference>
<dbReference type="InterPro" id="IPR002877">
    <property type="entry name" value="RNA_MeTrfase_FtsJ_dom"/>
</dbReference>
<dbReference type="InterPro" id="IPR015507">
    <property type="entry name" value="rRNA-MeTfrase_E"/>
</dbReference>
<dbReference type="InterPro" id="IPR029063">
    <property type="entry name" value="SAM-dependent_MTases_sf"/>
</dbReference>
<dbReference type="PANTHER" id="PTHR10920">
    <property type="entry name" value="RIBOSOMAL RNA METHYLTRANSFERASE"/>
    <property type="match status" value="1"/>
</dbReference>
<dbReference type="PANTHER" id="PTHR10920:SF18">
    <property type="entry name" value="RRNA METHYLTRANSFERASE 2, MITOCHONDRIAL"/>
    <property type="match status" value="1"/>
</dbReference>
<dbReference type="Pfam" id="PF01728">
    <property type="entry name" value="FtsJ"/>
    <property type="match status" value="1"/>
</dbReference>
<dbReference type="PIRSF" id="PIRSF005461">
    <property type="entry name" value="23S_rRNA_mtase"/>
    <property type="match status" value="1"/>
</dbReference>
<dbReference type="SUPFAM" id="SSF53335">
    <property type="entry name" value="S-adenosyl-L-methionine-dependent methyltransferases"/>
    <property type="match status" value="1"/>
</dbReference>
<protein>
    <recommendedName>
        <fullName evidence="1">Ribosomal RNA large subunit methyltransferase E</fullName>
        <ecNumber evidence="1">2.1.1.166</ecNumber>
    </recommendedName>
    <alternativeName>
        <fullName evidence="1">23S rRNA Um2552 methyltransferase</fullName>
    </alternativeName>
    <alternativeName>
        <fullName evidence="1">rRNA (uridine-2'-O-)-methyltransferase</fullName>
    </alternativeName>
</protein>
<keyword id="KW-0963">Cytoplasm</keyword>
<keyword id="KW-0489">Methyltransferase</keyword>
<keyword id="KW-1185">Reference proteome</keyword>
<keyword id="KW-0698">rRNA processing</keyword>
<keyword id="KW-0949">S-adenosyl-L-methionine</keyword>
<keyword id="KW-0808">Transferase</keyword>
<comment type="function">
    <text evidence="1">Specifically methylates the uridine in position 2552 of 23S rRNA at the 2'-O position of the ribose in the fully assembled 50S ribosomal subunit.</text>
</comment>
<comment type="catalytic activity">
    <reaction evidence="1">
        <text>uridine(2552) in 23S rRNA + S-adenosyl-L-methionine = 2'-O-methyluridine(2552) in 23S rRNA + S-adenosyl-L-homocysteine + H(+)</text>
        <dbReference type="Rhea" id="RHEA:42720"/>
        <dbReference type="Rhea" id="RHEA-COMP:10202"/>
        <dbReference type="Rhea" id="RHEA-COMP:10203"/>
        <dbReference type="ChEBI" id="CHEBI:15378"/>
        <dbReference type="ChEBI" id="CHEBI:57856"/>
        <dbReference type="ChEBI" id="CHEBI:59789"/>
        <dbReference type="ChEBI" id="CHEBI:65315"/>
        <dbReference type="ChEBI" id="CHEBI:74478"/>
        <dbReference type="EC" id="2.1.1.166"/>
    </reaction>
</comment>
<comment type="subcellular location">
    <subcellularLocation>
        <location evidence="1">Cytoplasm</location>
    </subcellularLocation>
</comment>
<comment type="similarity">
    <text evidence="1">Belongs to the class I-like SAM-binding methyltransferase superfamily. RNA methyltransferase RlmE family.</text>
</comment>
<sequence>MTHSKRWLEEHEKDPYVKRAKKEGYPSRAAYKLLEIHQKYKLFKPSMNVIDLGAAPGGWSQVAKDLVGPKGVVIAIDLLPMQSMLDVIFIQGDFNEPEIFNQLEAIVAKKTLTGQVDLVISDMAPNISGIKNVDQSRSLHLVELAWDCAQKLLARGGTFLVKVFQGPGVDRFLINLRPYFNQVKFLKPSASRSRSSEIYILAGEFLGYNQRV</sequence>
<accession>Q83BY4</accession>
<feature type="chain" id="PRO_0000155489" description="Ribosomal RNA large subunit methyltransferase E">
    <location>
        <begin position="1"/>
        <end position="212"/>
    </location>
</feature>
<feature type="active site" description="Proton acceptor" evidence="1">
    <location>
        <position position="162"/>
    </location>
</feature>
<feature type="binding site" evidence="1">
    <location>
        <position position="57"/>
    </location>
    <ligand>
        <name>S-adenosyl-L-methionine</name>
        <dbReference type="ChEBI" id="CHEBI:59789"/>
    </ligand>
</feature>
<feature type="binding site" evidence="1">
    <location>
        <position position="59"/>
    </location>
    <ligand>
        <name>S-adenosyl-L-methionine</name>
        <dbReference type="ChEBI" id="CHEBI:59789"/>
    </ligand>
</feature>
<feature type="binding site" evidence="1">
    <location>
        <position position="77"/>
    </location>
    <ligand>
        <name>S-adenosyl-L-methionine</name>
        <dbReference type="ChEBI" id="CHEBI:59789"/>
    </ligand>
</feature>
<feature type="binding site" evidence="1">
    <location>
        <position position="93"/>
    </location>
    <ligand>
        <name>S-adenosyl-L-methionine</name>
        <dbReference type="ChEBI" id="CHEBI:59789"/>
    </ligand>
</feature>
<feature type="binding site" evidence="1">
    <location>
        <position position="122"/>
    </location>
    <ligand>
        <name>S-adenosyl-L-methionine</name>
        <dbReference type="ChEBI" id="CHEBI:59789"/>
    </ligand>
</feature>
<proteinExistence type="inferred from homology"/>
<name>RLME_COXBU</name>
<evidence type="ECO:0000255" key="1">
    <source>
        <dbReference type="HAMAP-Rule" id="MF_01547"/>
    </source>
</evidence>
<gene>
    <name evidence="1" type="primary">rlmE</name>
    <name evidence="1" type="synonym">ftsJ</name>
    <name evidence="1" type="synonym">rrmJ</name>
    <name type="ordered locus">CBU_1353</name>
</gene>
<reference key="1">
    <citation type="journal article" date="2003" name="Proc. Natl. Acad. Sci. U.S.A.">
        <title>Complete genome sequence of the Q-fever pathogen, Coxiella burnetii.</title>
        <authorList>
            <person name="Seshadri R."/>
            <person name="Paulsen I.T."/>
            <person name="Eisen J.A."/>
            <person name="Read T.D."/>
            <person name="Nelson K.E."/>
            <person name="Nelson W.C."/>
            <person name="Ward N.L."/>
            <person name="Tettelin H."/>
            <person name="Davidsen T.M."/>
            <person name="Beanan M.J."/>
            <person name="DeBoy R.T."/>
            <person name="Daugherty S.C."/>
            <person name="Brinkac L.M."/>
            <person name="Madupu R."/>
            <person name="Dodson R.J."/>
            <person name="Khouri H.M."/>
            <person name="Lee K.H."/>
            <person name="Carty H.A."/>
            <person name="Scanlan D."/>
            <person name="Heinzen R.A."/>
            <person name="Thompson H.A."/>
            <person name="Samuel J.E."/>
            <person name="Fraser C.M."/>
            <person name="Heidelberg J.F."/>
        </authorList>
    </citation>
    <scope>NUCLEOTIDE SEQUENCE [LARGE SCALE GENOMIC DNA]</scope>
    <source>
        <strain>RSA 493 / Nine Mile phase I</strain>
    </source>
</reference>